<protein>
    <recommendedName>
        <fullName evidence="2">Baccatin III:3-amino-3-phenylpropanoyltransferase</fullName>
        <ecNumber evidence="1">2.3.1.320</ecNumber>
    </recommendedName>
</protein>
<name>BAPT_TAXCU</name>
<feature type="chain" id="PRO_0000456755" description="Baccatin III:3-amino-3-phenylpropanoyltransferase">
    <location>
        <begin position="1"/>
        <end position="445"/>
    </location>
</feature>
<accession>Q8H2B5</accession>
<proteinExistence type="evidence at protein level"/>
<gene>
    <name evidence="2" type="primary">BAPT</name>
</gene>
<comment type="function">
    <text evidence="1">Acyltransferase involved in taxol biosynthesis (PubMed:12232048). Catalyzes the selective 13-O-acylation of baccatin III with (3R)-3-amino-3-phenylpropanoyl-CoA as the acyl donor to form 3'-N-debenzoyl-2'-deoxytaxol (PubMed:12232048).</text>
</comment>
<comment type="catalytic activity">
    <reaction evidence="1">
        <text>(3R)-3-amino-3-phenylpropanoyl-CoA + baccatin III = 3'-N-debenzoyl-2'-deoxytaxol + CoA</text>
        <dbReference type="Rhea" id="RHEA:42488"/>
        <dbReference type="ChEBI" id="CHEBI:32898"/>
        <dbReference type="ChEBI" id="CHEBI:57287"/>
        <dbReference type="ChEBI" id="CHEBI:79186"/>
        <dbReference type="ChEBI" id="CHEBI:79188"/>
        <dbReference type="EC" id="2.3.1.320"/>
    </reaction>
    <physiologicalReaction direction="left-to-right" evidence="1">
        <dbReference type="Rhea" id="RHEA:42489"/>
    </physiologicalReaction>
</comment>
<comment type="biophysicochemical properties">
    <kinetics>
        <KM evidence="1">2.4 uM for baccatin III</KM>
        <KM evidence="1">4.9 uM for (3R)-3-amino-3-phenylpropanoyl-CoA</KM>
    </kinetics>
    <phDependence>
        <text evidence="1">Optimum pH is 6.8.</text>
    </phDependence>
</comment>
<comment type="pathway">
    <text evidence="3">Alkaloid biosynthesis; taxol biosynthesis.</text>
</comment>
<comment type="similarity">
    <text evidence="3">Belongs to the plant acyltransferase family.</text>
</comment>
<dbReference type="EC" id="2.3.1.320" evidence="1"/>
<dbReference type="EMBL" id="AY082804">
    <property type="protein sequence ID" value="AAL92459.1"/>
    <property type="molecule type" value="mRNA"/>
</dbReference>
<dbReference type="SMR" id="Q8H2B5"/>
<dbReference type="KEGG" id="ag:AAL92459"/>
<dbReference type="BioCyc" id="MetaCyc:MONOMER-13417"/>
<dbReference type="BRENDA" id="2.3.1.B16">
    <property type="organism ID" value="6225"/>
</dbReference>
<dbReference type="UniPathway" id="UPA00842"/>
<dbReference type="GO" id="GO:0102922">
    <property type="term" value="F:phenylpropanoyltransferase activity"/>
    <property type="evidence" value="ECO:0000314"/>
    <property type="project" value="UniProtKB"/>
</dbReference>
<dbReference type="GO" id="GO:0042617">
    <property type="term" value="P:paclitaxel biosynthetic process"/>
    <property type="evidence" value="ECO:0000314"/>
    <property type="project" value="UniProtKB"/>
</dbReference>
<dbReference type="Gene3D" id="3.30.559.10">
    <property type="entry name" value="Chloramphenicol acetyltransferase-like domain"/>
    <property type="match status" value="2"/>
</dbReference>
<dbReference type="InterPro" id="IPR023213">
    <property type="entry name" value="CAT-like_dom_sf"/>
</dbReference>
<dbReference type="InterPro" id="IPR050898">
    <property type="entry name" value="Plant_acyltransferase"/>
</dbReference>
<dbReference type="PANTHER" id="PTHR31147">
    <property type="entry name" value="ACYL TRANSFERASE 4"/>
    <property type="match status" value="1"/>
</dbReference>
<dbReference type="PANTHER" id="PTHR31147:SF1">
    <property type="entry name" value="ACYL TRANSFERASE 4"/>
    <property type="match status" value="1"/>
</dbReference>
<dbReference type="Pfam" id="PF02458">
    <property type="entry name" value="Transferase"/>
    <property type="match status" value="1"/>
</dbReference>
<organism>
    <name type="scientific">Taxus cuspidata</name>
    <name type="common">Japanese yew</name>
    <dbReference type="NCBI Taxonomy" id="99806"/>
    <lineage>
        <taxon>Eukaryota</taxon>
        <taxon>Viridiplantae</taxon>
        <taxon>Streptophyta</taxon>
        <taxon>Embryophyta</taxon>
        <taxon>Tracheophyta</taxon>
        <taxon>Spermatophyta</taxon>
        <taxon>Pinopsida</taxon>
        <taxon>Pinidae</taxon>
        <taxon>Conifers II</taxon>
        <taxon>Cupressales</taxon>
        <taxon>Taxaceae</taxon>
        <taxon>Taxus</taxon>
    </lineage>
</organism>
<sequence length="445" mass="50546">MKKTGSFAEFHVNMIERVMVRPCLPSPKTILPLSAIDNMARAFSNVLLVYAANMDRVSADPAKVIREALSKVLVYYYPFAGRLRNKENGELEVECTGQGVLFLEAMADSDLSVLTDLDNYNPSFQQLIFSLPQDTDIEDLHLLIVQVTRFTCGGFVVGANVYGSACDAKGFGQFLQSMAEMARGEVKPSIEPIWNRELVKLEHCMPFRMSHLQIIHAPVIEEKFVQTSLVINFEIINHIRRRIMEERKESLSSFEIVAALVWLAKIKAFQIPHSENVKLLFAMDLRRSFNPPLPHGYYGNAFGIACAMDNVHDLLSGSLLRTIMIIKKSKFSLHKELNSKTVMSSSVVDVNTKFEDVVSISDWRHSIYYEVDFGWGDAMNVSTMLQQQEHEKSLPTYFSFLQSTKNMPDGIKMLMFMPPSKLKKFKIEIEAMIKKYVTKVCPSKL</sequence>
<keyword id="KW-0012">Acyltransferase</keyword>
<keyword id="KW-0876">Taxol biosynthesis</keyword>
<keyword id="KW-0808">Transferase</keyword>
<reference key="1">
    <citation type="journal article" date="2002" name="Proc. Natl. Acad. Sci. U.S.A.">
        <title>Molecular cloning and heterologous expression of the C-13 phenylpropanoid side chain-CoA acyltransferase that functions in Taxol biosynthesis.</title>
        <authorList>
            <person name="Walker K."/>
            <person name="Fujisaki S."/>
            <person name="Long R."/>
            <person name="Croteau R."/>
        </authorList>
    </citation>
    <scope>NUCLEOTIDE SEQUENCE [MRNA]</scope>
    <scope>FUNCTION</scope>
    <scope>CATALYTIC ACTIVITY</scope>
    <scope>BIOPHYSICOCHEMICAL PROPERTIES</scope>
</reference>
<evidence type="ECO:0000269" key="1">
    <source>
    </source>
</evidence>
<evidence type="ECO:0000303" key="2">
    <source>
    </source>
</evidence>
<evidence type="ECO:0000305" key="3"/>